<accession>C5DYR7</accession>
<protein>
    <recommendedName>
        <fullName evidence="2">Adenylosuccinate synthetase</fullName>
        <shortName evidence="2">AMPSase</shortName>
        <shortName evidence="2">AdSS</shortName>
        <ecNumber evidence="2">6.3.4.4</ecNumber>
    </recommendedName>
    <alternativeName>
        <fullName evidence="2">IMP--aspartate ligase</fullName>
    </alternativeName>
</protein>
<reference key="1">
    <citation type="journal article" date="2009" name="Genome Res.">
        <title>Comparative genomics of protoploid Saccharomycetaceae.</title>
        <authorList>
            <consortium name="The Genolevures Consortium"/>
            <person name="Souciet J.-L."/>
            <person name="Dujon B."/>
            <person name="Gaillardin C."/>
            <person name="Johnston M."/>
            <person name="Baret P.V."/>
            <person name="Cliften P."/>
            <person name="Sherman D.J."/>
            <person name="Weissenbach J."/>
            <person name="Westhof E."/>
            <person name="Wincker P."/>
            <person name="Jubin C."/>
            <person name="Poulain J."/>
            <person name="Barbe V."/>
            <person name="Segurens B."/>
            <person name="Artiguenave F."/>
            <person name="Anthouard V."/>
            <person name="Vacherie B."/>
            <person name="Val M.-E."/>
            <person name="Fulton R.S."/>
            <person name="Minx P."/>
            <person name="Wilson R."/>
            <person name="Durrens P."/>
            <person name="Jean G."/>
            <person name="Marck C."/>
            <person name="Martin T."/>
            <person name="Nikolski M."/>
            <person name="Rolland T."/>
            <person name="Seret M.-L."/>
            <person name="Casaregola S."/>
            <person name="Despons L."/>
            <person name="Fairhead C."/>
            <person name="Fischer G."/>
            <person name="Lafontaine I."/>
            <person name="Leh V."/>
            <person name="Lemaire M."/>
            <person name="de Montigny J."/>
            <person name="Neuveglise C."/>
            <person name="Thierry A."/>
            <person name="Blanc-Lenfle I."/>
            <person name="Bleykasten C."/>
            <person name="Diffels J."/>
            <person name="Fritsch E."/>
            <person name="Frangeul L."/>
            <person name="Goeffon A."/>
            <person name="Jauniaux N."/>
            <person name="Kachouri-Lafond R."/>
            <person name="Payen C."/>
            <person name="Potier S."/>
            <person name="Pribylova L."/>
            <person name="Ozanne C."/>
            <person name="Richard G.-F."/>
            <person name="Sacerdot C."/>
            <person name="Straub M.-L."/>
            <person name="Talla E."/>
        </authorList>
    </citation>
    <scope>NUCLEOTIDE SEQUENCE [LARGE SCALE GENOMIC DNA]</scope>
    <source>
        <strain>ATCC 2623 / CBS 732 / BCRC 21506 / NBRC 1130 / NCYC 568 / NRRL Y-229</strain>
    </source>
</reference>
<dbReference type="EC" id="6.3.4.4" evidence="2"/>
<dbReference type="EMBL" id="CU928178">
    <property type="protein sequence ID" value="CAR28928.1"/>
    <property type="molecule type" value="Genomic_DNA"/>
</dbReference>
<dbReference type="RefSeq" id="XP_002497861.1">
    <property type="nucleotide sequence ID" value="XM_002497816.1"/>
</dbReference>
<dbReference type="SMR" id="C5DYR7"/>
<dbReference type="FunCoup" id="C5DYR7">
    <property type="interactions" value="865"/>
</dbReference>
<dbReference type="STRING" id="559307.C5DYR7"/>
<dbReference type="GeneID" id="8205633"/>
<dbReference type="KEGG" id="zro:ZYRO0F15202g"/>
<dbReference type="HOGENOM" id="CLU_029848_0_0_1"/>
<dbReference type="InParanoid" id="C5DYR7"/>
<dbReference type="UniPathway" id="UPA00075">
    <property type="reaction ID" value="UER00335"/>
</dbReference>
<dbReference type="Proteomes" id="UP000008536">
    <property type="component" value="Chromosome F"/>
</dbReference>
<dbReference type="GO" id="GO:0005737">
    <property type="term" value="C:cytoplasm"/>
    <property type="evidence" value="ECO:0007669"/>
    <property type="project" value="UniProtKB-SubCell"/>
</dbReference>
<dbReference type="GO" id="GO:0004019">
    <property type="term" value="F:adenylosuccinate synthase activity"/>
    <property type="evidence" value="ECO:0007669"/>
    <property type="project" value="UniProtKB-UniRule"/>
</dbReference>
<dbReference type="GO" id="GO:0005525">
    <property type="term" value="F:GTP binding"/>
    <property type="evidence" value="ECO:0007669"/>
    <property type="project" value="UniProtKB-UniRule"/>
</dbReference>
<dbReference type="GO" id="GO:0000287">
    <property type="term" value="F:magnesium ion binding"/>
    <property type="evidence" value="ECO:0007669"/>
    <property type="project" value="UniProtKB-UniRule"/>
</dbReference>
<dbReference type="GO" id="GO:0044208">
    <property type="term" value="P:'de novo' AMP biosynthetic process"/>
    <property type="evidence" value="ECO:0007669"/>
    <property type="project" value="UniProtKB-UniRule"/>
</dbReference>
<dbReference type="GO" id="GO:0046040">
    <property type="term" value="P:IMP metabolic process"/>
    <property type="evidence" value="ECO:0007669"/>
    <property type="project" value="TreeGrafter"/>
</dbReference>
<dbReference type="CDD" id="cd03108">
    <property type="entry name" value="AdSS"/>
    <property type="match status" value="1"/>
</dbReference>
<dbReference type="FunFam" id="3.90.170.10:FF:000001">
    <property type="entry name" value="Adenylosuccinate synthetase"/>
    <property type="match status" value="1"/>
</dbReference>
<dbReference type="FunFam" id="1.10.300.10:FF:000002">
    <property type="entry name" value="Adenylosuccinate synthetase, chloroplastic"/>
    <property type="match status" value="1"/>
</dbReference>
<dbReference type="Gene3D" id="3.40.440.10">
    <property type="entry name" value="Adenylosuccinate Synthetase, subunit A, domain 1"/>
    <property type="match status" value="1"/>
</dbReference>
<dbReference type="Gene3D" id="1.10.300.10">
    <property type="entry name" value="Adenylosuccinate Synthetase, subunit A, domain 2"/>
    <property type="match status" value="1"/>
</dbReference>
<dbReference type="Gene3D" id="3.90.170.10">
    <property type="entry name" value="Adenylosuccinate Synthetase, subunit A, domain 3"/>
    <property type="match status" value="1"/>
</dbReference>
<dbReference type="HAMAP" id="MF_00011">
    <property type="entry name" value="Adenylosucc_synth"/>
    <property type="match status" value="1"/>
</dbReference>
<dbReference type="InterPro" id="IPR018220">
    <property type="entry name" value="Adenylosuccin_syn_GTP-bd"/>
</dbReference>
<dbReference type="InterPro" id="IPR033128">
    <property type="entry name" value="Adenylosuccin_syn_Lys_AS"/>
</dbReference>
<dbReference type="InterPro" id="IPR042109">
    <property type="entry name" value="Adenylosuccinate_synth_dom1"/>
</dbReference>
<dbReference type="InterPro" id="IPR042110">
    <property type="entry name" value="Adenylosuccinate_synth_dom2"/>
</dbReference>
<dbReference type="InterPro" id="IPR042111">
    <property type="entry name" value="Adenylosuccinate_synth_dom3"/>
</dbReference>
<dbReference type="InterPro" id="IPR001114">
    <property type="entry name" value="Adenylosuccinate_synthetase"/>
</dbReference>
<dbReference type="InterPro" id="IPR027417">
    <property type="entry name" value="P-loop_NTPase"/>
</dbReference>
<dbReference type="NCBIfam" id="NF002223">
    <property type="entry name" value="PRK01117.1"/>
    <property type="match status" value="1"/>
</dbReference>
<dbReference type="NCBIfam" id="TIGR00184">
    <property type="entry name" value="purA"/>
    <property type="match status" value="1"/>
</dbReference>
<dbReference type="PANTHER" id="PTHR11846">
    <property type="entry name" value="ADENYLOSUCCINATE SYNTHETASE"/>
    <property type="match status" value="1"/>
</dbReference>
<dbReference type="PANTHER" id="PTHR11846:SF0">
    <property type="entry name" value="ADENYLOSUCCINATE SYNTHETASE"/>
    <property type="match status" value="1"/>
</dbReference>
<dbReference type="Pfam" id="PF00709">
    <property type="entry name" value="Adenylsucc_synt"/>
    <property type="match status" value="1"/>
</dbReference>
<dbReference type="SMART" id="SM00788">
    <property type="entry name" value="Adenylsucc_synt"/>
    <property type="match status" value="1"/>
</dbReference>
<dbReference type="SUPFAM" id="SSF52540">
    <property type="entry name" value="P-loop containing nucleoside triphosphate hydrolases"/>
    <property type="match status" value="1"/>
</dbReference>
<dbReference type="PROSITE" id="PS01266">
    <property type="entry name" value="ADENYLOSUCCIN_SYN_1"/>
    <property type="match status" value="1"/>
</dbReference>
<dbReference type="PROSITE" id="PS00513">
    <property type="entry name" value="ADENYLOSUCCIN_SYN_2"/>
    <property type="match status" value="1"/>
</dbReference>
<organism>
    <name type="scientific">Zygosaccharomyces rouxii (strain ATCC 2623 / CBS 732 / NBRC 1130 / NCYC 568 / NRRL Y-229)</name>
    <dbReference type="NCBI Taxonomy" id="559307"/>
    <lineage>
        <taxon>Eukaryota</taxon>
        <taxon>Fungi</taxon>
        <taxon>Dikarya</taxon>
        <taxon>Ascomycota</taxon>
        <taxon>Saccharomycotina</taxon>
        <taxon>Saccharomycetes</taxon>
        <taxon>Saccharomycetales</taxon>
        <taxon>Saccharomycetaceae</taxon>
        <taxon>Zygosaccharomyces</taxon>
    </lineage>
</organism>
<keyword id="KW-0963">Cytoplasm</keyword>
<keyword id="KW-0342">GTP-binding</keyword>
<keyword id="KW-0436">Ligase</keyword>
<keyword id="KW-0460">Magnesium</keyword>
<keyword id="KW-0479">Metal-binding</keyword>
<keyword id="KW-0547">Nucleotide-binding</keyword>
<keyword id="KW-0658">Purine biosynthesis</keyword>
<keyword id="KW-1185">Reference proteome</keyword>
<proteinExistence type="inferred from homology"/>
<feature type="chain" id="PRO_0000399371" description="Adenylosuccinate synthetase">
    <location>
        <begin position="1"/>
        <end position="435"/>
    </location>
</feature>
<feature type="active site" description="Proton acceptor" evidence="2">
    <location>
        <position position="12"/>
    </location>
</feature>
<feature type="active site" description="Proton donor" evidence="2">
    <location>
        <position position="40"/>
    </location>
</feature>
<feature type="binding site" evidence="2">
    <location>
        <begin position="11"/>
        <end position="17"/>
    </location>
    <ligand>
        <name>GTP</name>
        <dbReference type="ChEBI" id="CHEBI:37565"/>
    </ligand>
</feature>
<feature type="binding site" description="in other chain" evidence="2">
    <location>
        <begin position="12"/>
        <end position="15"/>
    </location>
    <ligand>
        <name>IMP</name>
        <dbReference type="ChEBI" id="CHEBI:58053"/>
        <note>ligand shared between dimeric partners</note>
    </ligand>
</feature>
<feature type="binding site" evidence="2">
    <location>
        <position position="12"/>
    </location>
    <ligand>
        <name>Mg(2+)</name>
        <dbReference type="ChEBI" id="CHEBI:18420"/>
    </ligand>
</feature>
<feature type="binding site" description="in other chain" evidence="2">
    <location>
        <begin position="37"/>
        <end position="40"/>
    </location>
    <ligand>
        <name>IMP</name>
        <dbReference type="ChEBI" id="CHEBI:58053"/>
        <note>ligand shared between dimeric partners</note>
    </ligand>
</feature>
<feature type="binding site" evidence="2">
    <location>
        <begin position="39"/>
        <end position="41"/>
    </location>
    <ligand>
        <name>GTP</name>
        <dbReference type="ChEBI" id="CHEBI:37565"/>
    </ligand>
</feature>
<feature type="binding site" evidence="2">
    <location>
        <position position="39"/>
    </location>
    <ligand>
        <name>Mg(2+)</name>
        <dbReference type="ChEBI" id="CHEBI:18420"/>
    </ligand>
</feature>
<feature type="binding site" description="in other chain" evidence="2">
    <location>
        <position position="134"/>
    </location>
    <ligand>
        <name>IMP</name>
        <dbReference type="ChEBI" id="CHEBI:58053"/>
        <note>ligand shared between dimeric partners</note>
    </ligand>
</feature>
<feature type="binding site" evidence="2">
    <location>
        <position position="148"/>
    </location>
    <ligand>
        <name>IMP</name>
        <dbReference type="ChEBI" id="CHEBI:58053"/>
        <note>ligand shared between dimeric partners</note>
    </ligand>
</feature>
<feature type="binding site" description="in other chain" evidence="2">
    <location>
        <position position="230"/>
    </location>
    <ligand>
        <name>IMP</name>
        <dbReference type="ChEBI" id="CHEBI:58053"/>
        <note>ligand shared between dimeric partners</note>
    </ligand>
</feature>
<feature type="binding site" description="in other chain" evidence="2">
    <location>
        <position position="245"/>
    </location>
    <ligand>
        <name>IMP</name>
        <dbReference type="ChEBI" id="CHEBI:58053"/>
        <note>ligand shared between dimeric partners</note>
    </ligand>
</feature>
<feature type="binding site" evidence="2">
    <location>
        <begin position="305"/>
        <end position="311"/>
    </location>
    <ligand>
        <name>substrate</name>
    </ligand>
</feature>
<feature type="binding site" description="in other chain" evidence="2">
    <location>
        <position position="309"/>
    </location>
    <ligand>
        <name>IMP</name>
        <dbReference type="ChEBI" id="CHEBI:58053"/>
        <note>ligand shared between dimeric partners</note>
    </ligand>
</feature>
<feature type="binding site" evidence="2">
    <location>
        <position position="311"/>
    </location>
    <ligand>
        <name>GTP</name>
        <dbReference type="ChEBI" id="CHEBI:37565"/>
    </ligand>
</feature>
<feature type="binding site" evidence="2">
    <location>
        <begin position="337"/>
        <end position="339"/>
    </location>
    <ligand>
        <name>GTP</name>
        <dbReference type="ChEBI" id="CHEBI:37565"/>
    </ligand>
</feature>
<feature type="binding site" evidence="2">
    <location>
        <begin position="419"/>
        <end position="421"/>
    </location>
    <ligand>
        <name>GTP</name>
        <dbReference type="ChEBI" id="CHEBI:37565"/>
    </ligand>
</feature>
<sequence length="435" mass="48670">MVNVVLGAQWGDEGKGKLVDLLVGKYDLVARCAGGNNAGHTIVVDGVKYDFHMLPSGLVNPKSLNLLGNGVVIHVPSFFKELEDLETKGLNDARERLFISSRAHLVFDFHQRTDKLRELELSGASTDGKNIGTTGKGIGPTYATKASRSGIRVHHLVNDNPESWTVFENMYRRLLETRKKRYGDFEYDAEGELARFKKYKEDLKPFVVDSVVFMHKAIEAKKKILVEGANALMLDIDFGTYPFVTSSNTGIAGVISGLGIPPKVIDECYGVVKAYTTRVGEGPFPTEQLNEDGEKLQEIGAEYGVTTGRKRRCGWLDLVIMKYSTLINGYTSLNITKLDVLDTFKEIPIGIGYYYKGQKLDLFPEDLIKLGKVEVEYKVLPGWQQDITKVTKYDDLPENAKKYIKFIEDFVGVPVEWVGTGPSRDNMVHKEIQRI</sequence>
<comment type="function">
    <text evidence="1">Plays an important role in the de novo pathway and in the salvage pathway of purine nucleotide biosynthesis. Catalyzes the first committed step in the biosynthesis of AMP from IMP (By similarity).</text>
</comment>
<comment type="catalytic activity">
    <reaction evidence="2">
        <text>IMP + L-aspartate + GTP = N(6)-(1,2-dicarboxyethyl)-AMP + GDP + phosphate + 2 H(+)</text>
        <dbReference type="Rhea" id="RHEA:15753"/>
        <dbReference type="ChEBI" id="CHEBI:15378"/>
        <dbReference type="ChEBI" id="CHEBI:29991"/>
        <dbReference type="ChEBI" id="CHEBI:37565"/>
        <dbReference type="ChEBI" id="CHEBI:43474"/>
        <dbReference type="ChEBI" id="CHEBI:57567"/>
        <dbReference type="ChEBI" id="CHEBI:58053"/>
        <dbReference type="ChEBI" id="CHEBI:58189"/>
        <dbReference type="EC" id="6.3.4.4"/>
    </reaction>
</comment>
<comment type="cofactor">
    <cofactor evidence="2">
        <name>Mg(2+)</name>
        <dbReference type="ChEBI" id="CHEBI:18420"/>
    </cofactor>
    <text evidence="2">Binds 1 Mg(2+) ion per subunit.</text>
</comment>
<comment type="pathway">
    <text evidence="2">Purine metabolism; AMP biosynthesis via de novo pathway; AMP from IMP: step 1/2.</text>
</comment>
<comment type="subunit">
    <text evidence="2">Homodimer.</text>
</comment>
<comment type="subcellular location">
    <subcellularLocation>
        <location evidence="2">Cytoplasm</location>
    </subcellularLocation>
</comment>
<comment type="similarity">
    <text evidence="2">Belongs to the adenylosuccinate synthetase family.</text>
</comment>
<gene>
    <name type="ordered locus">ZYRO0F15202g</name>
</gene>
<name>PURA_ZYGRC</name>
<evidence type="ECO:0000250" key="1"/>
<evidence type="ECO:0000255" key="2">
    <source>
        <dbReference type="HAMAP-Rule" id="MF_03125"/>
    </source>
</evidence>